<accession>P0CT18</accession>
<accession>L7IMP3</accession>
<evidence type="ECO:0000250" key="1"/>
<evidence type="ECO:0000255" key="2"/>
<evidence type="ECO:0000255" key="3">
    <source>
        <dbReference type="PROSITE-ProRule" id="PRU01161"/>
    </source>
</evidence>
<evidence type="ECO:0000256" key="4">
    <source>
        <dbReference type="SAM" id="MobiDB-lite"/>
    </source>
</evidence>
<evidence type="ECO:0000305" key="5"/>
<reference key="1">
    <citation type="journal article" date="2012" name="PLoS Genet.">
        <title>Comparative analysis of the genomes of two field isolates of the rice blast fungus Magnaporthe oryzae.</title>
        <authorList>
            <person name="Xue M."/>
            <person name="Yang J."/>
            <person name="Li Z."/>
            <person name="Hu S."/>
            <person name="Yao N."/>
            <person name="Dean R.A."/>
            <person name="Zhao W."/>
            <person name="Shen M."/>
            <person name="Zhang H."/>
            <person name="Li C."/>
            <person name="Liu L."/>
            <person name="Cao L."/>
            <person name="Xu X."/>
            <person name="Xing Y."/>
            <person name="Hsiang T."/>
            <person name="Zhang Z."/>
            <person name="Xu J.-R."/>
            <person name="Peng Y.-L."/>
        </authorList>
    </citation>
    <scope>NUCLEOTIDE SEQUENCE [LARGE SCALE GENOMIC DNA]</scope>
    <source>
        <strain>Y34</strain>
    </source>
</reference>
<sequence>MTEKQINVPARAYGFPPDAYDPSLLPDFDVSFLRPEDLEAFIQALSAPDTTQPPDDGLASPRSPSARSFSSFDFTKRASSVLPDDAQVVAAHAAAAGGETAPIPGDNDTNNANGFGNSSSQSLFITAQSDWAPVHEKVVGSQTHRQKKSSRRRKRSKAVAPGRRTRDETREGYLYGLLKWPFLLIVGAWIVGLAVTYLFTRAYIFIYEQFVAWRGRREKLRRNMRATSRYPDWVKAARDLDNFLGNEAWKEQNEFAYYDSKTVRRVWDSLRRSRIRAAQMEASGSQSSSSSNEGKTTPIEDLKVLIEACVKNNFVGVENPRLYSQTYYGTKNLVQNYVDEVEKSLTALLETKQLSMEDKRSIFKRVSANYGRTALCLSGGASFAYYHFGVVKALLEEDLLPDVITGTSGGALVAALVATRTNEELKKLLVPSLSTKITACREPITVWFRRWWSTGARFDSVDWAKQCSWWSHGSMTFREAYERTGRILNVSCVPADPHSPTILCNYLTSPDCVIWSAVLASAAVPGILNPVVLMMKKADGNLAPYSFGHKWKDGSLRTDIPIRALNLQFNVNFTIVSQVNPHINLFFFSSRGSVGQPVTHRRGRGWRGGFLGSATEQYIKLDLTKWLKVLRQLELLPRPLGQDWSQLWLQQSFGGTVTIWPKTILSDFVHILSDPDNARLARMIHEGQQSTFPKIKFISNRLRIERLIERGRRETRPYIRRGSVESIISEDDLRELLLLRGSTNGTDEEITTNDEMEFASDEKAVLTEDEGQFDGVTDNTEGSPLLK</sequence>
<keyword id="KW-0378">Hydrolase</keyword>
<keyword id="KW-0442">Lipid degradation</keyword>
<keyword id="KW-0443">Lipid metabolism</keyword>
<keyword id="KW-0472">Membrane</keyword>
<keyword id="KW-0812">Transmembrane</keyword>
<keyword id="KW-1133">Transmembrane helix</keyword>
<proteinExistence type="inferred from homology"/>
<feature type="chain" id="PRO_0000423551" description="Patatin-like phospholipase domain-containing protein OOU_Y34scaffold00095g16.3">
    <location>
        <begin position="1"/>
        <end position="787"/>
    </location>
</feature>
<feature type="transmembrane region" description="Helical" evidence="2">
    <location>
        <begin position="180"/>
        <end position="200"/>
    </location>
</feature>
<feature type="domain" description="PNPLA" evidence="3">
    <location>
        <begin position="375"/>
        <end position="566"/>
    </location>
</feature>
<feature type="region of interest" description="Disordered" evidence="4">
    <location>
        <begin position="47"/>
        <end position="69"/>
    </location>
</feature>
<feature type="region of interest" description="Disordered" evidence="4">
    <location>
        <begin position="137"/>
        <end position="164"/>
    </location>
</feature>
<feature type="region of interest" description="Disordered" evidence="4">
    <location>
        <begin position="745"/>
        <end position="787"/>
    </location>
</feature>
<feature type="short sequence motif" description="GXSXG" evidence="3">
    <location>
        <begin position="406"/>
        <end position="410"/>
    </location>
</feature>
<feature type="compositionally biased region" description="Low complexity" evidence="4">
    <location>
        <begin position="59"/>
        <end position="69"/>
    </location>
</feature>
<feature type="compositionally biased region" description="Basic residues" evidence="4">
    <location>
        <begin position="144"/>
        <end position="157"/>
    </location>
</feature>
<feature type="compositionally biased region" description="Acidic residues" evidence="4">
    <location>
        <begin position="746"/>
        <end position="759"/>
    </location>
</feature>
<feature type="compositionally biased region" description="Polar residues" evidence="4">
    <location>
        <begin position="777"/>
        <end position="787"/>
    </location>
</feature>
<feature type="active site" description="Nucleophile" evidence="3">
    <location>
        <position position="408"/>
    </location>
</feature>
<feature type="active site" description="Proton acceptor" evidence="3">
    <location>
        <position position="553"/>
    </location>
</feature>
<comment type="function">
    <text evidence="1">Probable lipid hydrolase.</text>
</comment>
<comment type="subcellular location">
    <subcellularLocation>
        <location evidence="5">Membrane</location>
        <topology evidence="5">Single-pass membrane protein</topology>
    </subcellularLocation>
</comment>
<comment type="similarity">
    <text evidence="5">Belongs to the PLPL family.</text>
</comment>
<comment type="sequence caution" evidence="5">
    <conflict type="erroneous gene model prediction">
        <sequence resource="EMBL-CDS" id="ELQ44171"/>
    </conflict>
    <text>The predicted gene OOU_Y34scaffold00095g16 has been split into 3 genes: OOU_Y34scaffold00095g16.1, OOU_Y34scaffold00095g16.2 and OOU_Y34scaffold00095g16.3.</text>
</comment>
<organism>
    <name type="scientific">Pyricularia oryzae (strain Y34)</name>
    <name type="common">Rice blast fungus</name>
    <name type="synonym">Magnaporthe oryzae</name>
    <dbReference type="NCBI Taxonomy" id="1143189"/>
    <lineage>
        <taxon>Eukaryota</taxon>
        <taxon>Fungi</taxon>
        <taxon>Dikarya</taxon>
        <taxon>Ascomycota</taxon>
        <taxon>Pezizomycotina</taxon>
        <taxon>Sordariomycetes</taxon>
        <taxon>Sordariomycetidae</taxon>
        <taxon>Magnaporthales</taxon>
        <taxon>Pyriculariaceae</taxon>
        <taxon>Pyricularia</taxon>
    </lineage>
</organism>
<name>PLPL_PYRO3</name>
<dbReference type="EC" id="3.1.1.-"/>
<dbReference type="EMBL" id="JH793327">
    <property type="protein sequence ID" value="ELQ44171.1"/>
    <property type="status" value="ALT_SEQ"/>
    <property type="molecule type" value="Genomic_DNA"/>
</dbReference>
<dbReference type="Proteomes" id="UP000011086">
    <property type="component" value="Unassembled WGS sequence"/>
</dbReference>
<dbReference type="GO" id="GO:0016020">
    <property type="term" value="C:membrane"/>
    <property type="evidence" value="ECO:0007669"/>
    <property type="project" value="UniProtKB-SubCell"/>
</dbReference>
<dbReference type="GO" id="GO:0004806">
    <property type="term" value="F:triacylglycerol lipase activity"/>
    <property type="evidence" value="ECO:0007669"/>
    <property type="project" value="InterPro"/>
</dbReference>
<dbReference type="GO" id="GO:0016042">
    <property type="term" value="P:lipid catabolic process"/>
    <property type="evidence" value="ECO:0007669"/>
    <property type="project" value="UniProtKB-KW"/>
</dbReference>
<dbReference type="GO" id="GO:0006641">
    <property type="term" value="P:triglyceride metabolic process"/>
    <property type="evidence" value="ECO:0007669"/>
    <property type="project" value="UniProtKB-ARBA"/>
</dbReference>
<dbReference type="CDD" id="cd07232">
    <property type="entry name" value="Pat_PLPL"/>
    <property type="match status" value="1"/>
</dbReference>
<dbReference type="Gene3D" id="3.40.1090.10">
    <property type="entry name" value="Cytosolic phospholipase A2 catalytic domain"/>
    <property type="match status" value="2"/>
</dbReference>
<dbReference type="InterPro" id="IPR016035">
    <property type="entry name" value="Acyl_Trfase/lysoPLipase"/>
</dbReference>
<dbReference type="InterPro" id="IPR050301">
    <property type="entry name" value="NTE"/>
</dbReference>
<dbReference type="InterPro" id="IPR002641">
    <property type="entry name" value="PNPLA_dom"/>
</dbReference>
<dbReference type="InterPro" id="IPR021771">
    <property type="entry name" value="Triacylglycerol_lipase_N"/>
</dbReference>
<dbReference type="PANTHER" id="PTHR14226">
    <property type="entry name" value="NEUROPATHY TARGET ESTERASE/SWISS CHEESE D.MELANOGASTER"/>
    <property type="match status" value="1"/>
</dbReference>
<dbReference type="PANTHER" id="PTHR14226:SF66">
    <property type="entry name" value="TRIACYLGLYCEROL LIPASE PTL2"/>
    <property type="match status" value="1"/>
</dbReference>
<dbReference type="Pfam" id="PF11815">
    <property type="entry name" value="DUF3336"/>
    <property type="match status" value="1"/>
</dbReference>
<dbReference type="Pfam" id="PF01734">
    <property type="entry name" value="Patatin"/>
    <property type="match status" value="1"/>
</dbReference>
<dbReference type="SUPFAM" id="SSF52151">
    <property type="entry name" value="FabD/lysophospholipase-like"/>
    <property type="match status" value="1"/>
</dbReference>
<dbReference type="PROSITE" id="PS51635">
    <property type="entry name" value="PNPLA"/>
    <property type="match status" value="1"/>
</dbReference>
<protein>
    <recommendedName>
        <fullName>Patatin-like phospholipase domain-containing protein OOU_Y34scaffold00095g16.3</fullName>
        <ecNumber>3.1.1.-</ecNumber>
    </recommendedName>
</protein>
<gene>
    <name type="ORF">OOU_Y34scaffold00095g16.3</name>
</gene>